<dbReference type="EC" id="3.4.21.88" evidence="1"/>
<dbReference type="EMBL" id="CP000948">
    <property type="protein sequence ID" value="ACB05042.1"/>
    <property type="molecule type" value="Genomic_DNA"/>
</dbReference>
<dbReference type="RefSeq" id="WP_000646078.1">
    <property type="nucleotide sequence ID" value="NC_010473.1"/>
</dbReference>
<dbReference type="SMR" id="B1XC42"/>
<dbReference type="MEROPS" id="S24.001"/>
<dbReference type="GeneID" id="93777788"/>
<dbReference type="KEGG" id="ecd:ECDH10B_4232"/>
<dbReference type="HOGENOM" id="CLU_066192_45_3_6"/>
<dbReference type="GO" id="GO:0003677">
    <property type="term" value="F:DNA binding"/>
    <property type="evidence" value="ECO:0007669"/>
    <property type="project" value="UniProtKB-UniRule"/>
</dbReference>
<dbReference type="GO" id="GO:0004252">
    <property type="term" value="F:serine-type endopeptidase activity"/>
    <property type="evidence" value="ECO:0007669"/>
    <property type="project" value="UniProtKB-UniRule"/>
</dbReference>
<dbReference type="GO" id="GO:0006281">
    <property type="term" value="P:DNA repair"/>
    <property type="evidence" value="ECO:0007669"/>
    <property type="project" value="UniProtKB-UniRule"/>
</dbReference>
<dbReference type="GO" id="GO:0006260">
    <property type="term" value="P:DNA replication"/>
    <property type="evidence" value="ECO:0007669"/>
    <property type="project" value="UniProtKB-UniRule"/>
</dbReference>
<dbReference type="GO" id="GO:0045892">
    <property type="term" value="P:negative regulation of DNA-templated transcription"/>
    <property type="evidence" value="ECO:0007669"/>
    <property type="project" value="UniProtKB-UniRule"/>
</dbReference>
<dbReference type="GO" id="GO:0006508">
    <property type="term" value="P:proteolysis"/>
    <property type="evidence" value="ECO:0007669"/>
    <property type="project" value="InterPro"/>
</dbReference>
<dbReference type="GO" id="GO:0009432">
    <property type="term" value="P:SOS response"/>
    <property type="evidence" value="ECO:0007669"/>
    <property type="project" value="UniProtKB-UniRule"/>
</dbReference>
<dbReference type="CDD" id="cd06529">
    <property type="entry name" value="S24_LexA-like"/>
    <property type="match status" value="1"/>
</dbReference>
<dbReference type="FunFam" id="1.10.10.10:FF:000009">
    <property type="entry name" value="LexA repressor"/>
    <property type="match status" value="1"/>
</dbReference>
<dbReference type="FunFam" id="2.10.109.10:FF:000001">
    <property type="entry name" value="LexA repressor"/>
    <property type="match status" value="1"/>
</dbReference>
<dbReference type="Gene3D" id="2.10.109.10">
    <property type="entry name" value="Umud Fragment, subunit A"/>
    <property type="match status" value="1"/>
</dbReference>
<dbReference type="Gene3D" id="1.10.10.10">
    <property type="entry name" value="Winged helix-like DNA-binding domain superfamily/Winged helix DNA-binding domain"/>
    <property type="match status" value="1"/>
</dbReference>
<dbReference type="HAMAP" id="MF_00015">
    <property type="entry name" value="LexA"/>
    <property type="match status" value="1"/>
</dbReference>
<dbReference type="InterPro" id="IPR006200">
    <property type="entry name" value="LexA"/>
</dbReference>
<dbReference type="InterPro" id="IPR039418">
    <property type="entry name" value="LexA-like"/>
</dbReference>
<dbReference type="InterPro" id="IPR036286">
    <property type="entry name" value="LexA/Signal_pep-like_sf"/>
</dbReference>
<dbReference type="InterPro" id="IPR006199">
    <property type="entry name" value="LexA_DNA-bd_dom"/>
</dbReference>
<dbReference type="InterPro" id="IPR050077">
    <property type="entry name" value="LexA_repressor"/>
</dbReference>
<dbReference type="InterPro" id="IPR006197">
    <property type="entry name" value="Peptidase_S24_LexA"/>
</dbReference>
<dbReference type="InterPro" id="IPR015927">
    <property type="entry name" value="Peptidase_S24_S26A/B/C"/>
</dbReference>
<dbReference type="InterPro" id="IPR036388">
    <property type="entry name" value="WH-like_DNA-bd_sf"/>
</dbReference>
<dbReference type="InterPro" id="IPR036390">
    <property type="entry name" value="WH_DNA-bd_sf"/>
</dbReference>
<dbReference type="NCBIfam" id="TIGR00498">
    <property type="entry name" value="lexA"/>
    <property type="match status" value="1"/>
</dbReference>
<dbReference type="PANTHER" id="PTHR33516">
    <property type="entry name" value="LEXA REPRESSOR"/>
    <property type="match status" value="1"/>
</dbReference>
<dbReference type="PANTHER" id="PTHR33516:SF2">
    <property type="entry name" value="LEXA REPRESSOR-RELATED"/>
    <property type="match status" value="1"/>
</dbReference>
<dbReference type="Pfam" id="PF01726">
    <property type="entry name" value="LexA_DNA_bind"/>
    <property type="match status" value="1"/>
</dbReference>
<dbReference type="Pfam" id="PF00717">
    <property type="entry name" value="Peptidase_S24"/>
    <property type="match status" value="1"/>
</dbReference>
<dbReference type="PRINTS" id="PR00726">
    <property type="entry name" value="LEXASERPTASE"/>
</dbReference>
<dbReference type="SUPFAM" id="SSF51306">
    <property type="entry name" value="LexA/Signal peptidase"/>
    <property type="match status" value="1"/>
</dbReference>
<dbReference type="SUPFAM" id="SSF46785">
    <property type="entry name" value="Winged helix' DNA-binding domain"/>
    <property type="match status" value="1"/>
</dbReference>
<proteinExistence type="inferred from homology"/>
<feature type="chain" id="PRO_1000089562" description="LexA repressor">
    <location>
        <begin position="1"/>
        <end position="202"/>
    </location>
</feature>
<feature type="DNA-binding region" description="H-T-H motif" evidence="1">
    <location>
        <begin position="28"/>
        <end position="48"/>
    </location>
</feature>
<feature type="active site" description="For autocatalytic cleavage activity" evidence="1">
    <location>
        <position position="119"/>
    </location>
</feature>
<feature type="active site" description="For autocatalytic cleavage activity" evidence="1">
    <location>
        <position position="156"/>
    </location>
</feature>
<feature type="site" description="Cleavage; by autolysis" evidence="1">
    <location>
        <begin position="84"/>
        <end position="85"/>
    </location>
</feature>
<protein>
    <recommendedName>
        <fullName evidence="1">LexA repressor</fullName>
        <ecNumber evidence="1">3.4.21.88</ecNumber>
    </recommendedName>
</protein>
<keyword id="KW-0068">Autocatalytic cleavage</keyword>
<keyword id="KW-0227">DNA damage</keyword>
<keyword id="KW-0234">DNA repair</keyword>
<keyword id="KW-0235">DNA replication</keyword>
<keyword id="KW-0238">DNA-binding</keyword>
<keyword id="KW-0378">Hydrolase</keyword>
<keyword id="KW-0678">Repressor</keyword>
<keyword id="KW-0742">SOS response</keyword>
<keyword id="KW-0804">Transcription</keyword>
<keyword id="KW-0805">Transcription regulation</keyword>
<reference key="1">
    <citation type="journal article" date="2008" name="J. Bacteriol.">
        <title>The complete genome sequence of Escherichia coli DH10B: insights into the biology of a laboratory workhorse.</title>
        <authorList>
            <person name="Durfee T."/>
            <person name="Nelson R."/>
            <person name="Baldwin S."/>
            <person name="Plunkett G. III"/>
            <person name="Burland V."/>
            <person name="Mau B."/>
            <person name="Petrosino J.F."/>
            <person name="Qin X."/>
            <person name="Muzny D.M."/>
            <person name="Ayele M."/>
            <person name="Gibbs R.A."/>
            <person name="Csorgo B."/>
            <person name="Posfai G."/>
            <person name="Weinstock G.M."/>
            <person name="Blattner F.R."/>
        </authorList>
    </citation>
    <scope>NUCLEOTIDE SEQUENCE [LARGE SCALE GENOMIC DNA]</scope>
    <source>
        <strain>K12 / DH10B</strain>
    </source>
</reference>
<comment type="function">
    <text evidence="1">Represses a number of genes involved in the response to DNA damage (SOS response), including recA and lexA. Binds to the 16 bp palindromic sequence 5'-CTGTATATATATACAG-3'. In the presence of single-stranded DNA, RecA interacts with LexA causing an autocatalytic cleavage which disrupts the DNA-binding part of LexA, leading to derepression of the SOS regulon and eventually DNA repair.</text>
</comment>
<comment type="catalytic activity">
    <reaction evidence="1">
        <text>Hydrolysis of Ala-|-Gly bond in repressor LexA.</text>
        <dbReference type="EC" id="3.4.21.88"/>
    </reaction>
</comment>
<comment type="subunit">
    <text evidence="1">Homodimer.</text>
</comment>
<comment type="similarity">
    <text evidence="1">Belongs to the peptidase S24 family.</text>
</comment>
<gene>
    <name evidence="1" type="primary">lexA</name>
    <name type="ordered locus">ECDH10B_4232</name>
</gene>
<evidence type="ECO:0000255" key="1">
    <source>
        <dbReference type="HAMAP-Rule" id="MF_00015"/>
    </source>
</evidence>
<name>LEXA_ECODH</name>
<organism>
    <name type="scientific">Escherichia coli (strain K12 / DH10B)</name>
    <dbReference type="NCBI Taxonomy" id="316385"/>
    <lineage>
        <taxon>Bacteria</taxon>
        <taxon>Pseudomonadati</taxon>
        <taxon>Pseudomonadota</taxon>
        <taxon>Gammaproteobacteria</taxon>
        <taxon>Enterobacterales</taxon>
        <taxon>Enterobacteriaceae</taxon>
        <taxon>Escherichia</taxon>
    </lineage>
</organism>
<sequence length="202" mass="22358">MKALTARQQEVFDLIRDHISQTGMPPTRAEIAQRLGFRSPNAAEEHLKALARKGVIEIVSGASRGIRLLQEEEEGLPLVGRVAAGEPLLAQQHIEGHYQVDPSLFKPNADFLLRVSGMSMKDIGIMDGDLLAVHKTQDVRNGQVVVARIDDEVTVKRLKKQGNKVELLPENSEFKPIVVDLRQQSFTIEGLAVGVIRNGDWL</sequence>
<accession>B1XC42</accession>